<comment type="function">
    <text evidence="3">Thrombin-like snake venom serine protease that cleaves beta chain of fibrinogen (FGB), releasing fibrinopeptide B. Has a coagulant activity activating blood coagulation factors V (F5) and XIII (F13A1).</text>
</comment>
<comment type="activity regulation">
    <text evidence="3">Strongly inhibited by diisopropylfluorophosphate (DFP) and to a lesser extent by PMSF, benzamidine and 4,6-diamidino-2-phenylindole. Low inhibition by hirudin.</text>
</comment>
<comment type="subunit">
    <text evidence="1">Monomer.</text>
</comment>
<comment type="subcellular location">
    <subcellularLocation>
        <location>Secreted</location>
    </subcellularLocation>
</comment>
<comment type="tissue specificity">
    <text>Expressed by the venom gland.</text>
</comment>
<comment type="PTM">
    <text>Not glycosylated.</text>
</comment>
<comment type="mass spectrometry" mass="25400.7" method="MALDI" evidence="3"/>
<comment type="similarity">
    <text evidence="2">Belongs to the peptidase S1 family. Snake venom subfamily.</text>
</comment>
<protein>
    <recommendedName>
        <fullName>Thrombin-like enzyme contortrixobin</fullName>
        <shortName>SVTLE</shortName>
        <ecNumber>3.4.21.-</ecNumber>
    </recommendedName>
    <alternativeName>
        <fullName>Fibrinogen-clotting enzyme</fullName>
    </alternativeName>
    <alternativeName>
        <fullName>Snake venom serine protease</fullName>
        <shortName>SVSP</shortName>
    </alternativeName>
    <alternativeName>
        <fullName>Venombin B</fullName>
    </alternativeName>
</protein>
<sequence length="234" mass="25413">VVGGDECNINEHRFLVAIFNSNGFVCSGTLINQEWVLTAAHCDSTDFQIKLGAHSKKVLNEDEQIRNPKEKFICPNKKNDEVLDKDIMLIKLDSRVSNSEHIAPLSLPSSPPSVGSVCHIMGWGSITPIEVTFPDVPHCAYINLLDDAACQPGYPEVLPEYRTLCAGILEGGKDTCNYDSGGPLICNGQFQGIVSYGAHPCGQSLKPGIYTKVFDYNDWIQSIIAGNTAATCPP</sequence>
<dbReference type="EC" id="3.4.21.-"/>
<dbReference type="SMR" id="P82981"/>
<dbReference type="GO" id="GO:0005576">
    <property type="term" value="C:extracellular region"/>
    <property type="evidence" value="ECO:0007669"/>
    <property type="project" value="UniProtKB-SubCell"/>
</dbReference>
<dbReference type="GO" id="GO:0030141">
    <property type="term" value="C:secretory granule"/>
    <property type="evidence" value="ECO:0007669"/>
    <property type="project" value="TreeGrafter"/>
</dbReference>
<dbReference type="GO" id="GO:0004252">
    <property type="term" value="F:serine-type endopeptidase activity"/>
    <property type="evidence" value="ECO:0007669"/>
    <property type="project" value="InterPro"/>
</dbReference>
<dbReference type="GO" id="GO:0090729">
    <property type="term" value="F:toxin activity"/>
    <property type="evidence" value="ECO:0007669"/>
    <property type="project" value="UniProtKB-KW"/>
</dbReference>
<dbReference type="GO" id="GO:0006508">
    <property type="term" value="P:proteolysis"/>
    <property type="evidence" value="ECO:0007669"/>
    <property type="project" value="UniProtKB-KW"/>
</dbReference>
<dbReference type="CDD" id="cd00190">
    <property type="entry name" value="Tryp_SPc"/>
    <property type="match status" value="1"/>
</dbReference>
<dbReference type="FunFam" id="2.40.10.10:FF:000158">
    <property type="entry name" value="Thrombin-like enzyme saxthrombin"/>
    <property type="match status" value="1"/>
</dbReference>
<dbReference type="FunFam" id="2.40.10.10:FF:000153">
    <property type="entry name" value="Venom plasminogen activator TSV-PA"/>
    <property type="match status" value="1"/>
</dbReference>
<dbReference type="Gene3D" id="2.40.10.10">
    <property type="entry name" value="Trypsin-like serine proteases"/>
    <property type="match status" value="2"/>
</dbReference>
<dbReference type="InterPro" id="IPR009003">
    <property type="entry name" value="Peptidase_S1_PA"/>
</dbReference>
<dbReference type="InterPro" id="IPR043504">
    <property type="entry name" value="Peptidase_S1_PA_chymotrypsin"/>
</dbReference>
<dbReference type="InterPro" id="IPR001314">
    <property type="entry name" value="Peptidase_S1A"/>
</dbReference>
<dbReference type="InterPro" id="IPR001254">
    <property type="entry name" value="Trypsin_dom"/>
</dbReference>
<dbReference type="InterPro" id="IPR018114">
    <property type="entry name" value="TRYPSIN_HIS"/>
</dbReference>
<dbReference type="PANTHER" id="PTHR24271:SF47">
    <property type="entry name" value="KALLIKREIN-1"/>
    <property type="match status" value="1"/>
</dbReference>
<dbReference type="PANTHER" id="PTHR24271">
    <property type="entry name" value="KALLIKREIN-RELATED"/>
    <property type="match status" value="1"/>
</dbReference>
<dbReference type="Pfam" id="PF00089">
    <property type="entry name" value="Trypsin"/>
    <property type="match status" value="1"/>
</dbReference>
<dbReference type="PRINTS" id="PR00722">
    <property type="entry name" value="CHYMOTRYPSIN"/>
</dbReference>
<dbReference type="SMART" id="SM00020">
    <property type="entry name" value="Tryp_SPc"/>
    <property type="match status" value="1"/>
</dbReference>
<dbReference type="SUPFAM" id="SSF50494">
    <property type="entry name" value="Trypsin-like serine proteases"/>
    <property type="match status" value="1"/>
</dbReference>
<dbReference type="PROSITE" id="PS50240">
    <property type="entry name" value="TRYPSIN_DOM"/>
    <property type="match status" value="1"/>
</dbReference>
<dbReference type="PROSITE" id="PS00134">
    <property type="entry name" value="TRYPSIN_HIS"/>
    <property type="match status" value="1"/>
</dbReference>
<feature type="chain" id="PRO_0000088727" description="Thrombin-like enzyme contortrixobin">
    <location>
        <begin position="1"/>
        <end position="234"/>
    </location>
</feature>
<feature type="domain" description="Peptidase S1" evidence="2">
    <location>
        <begin position="1"/>
        <end position="225"/>
    </location>
</feature>
<feature type="active site" description="Charge relay system" evidence="1">
    <location>
        <position position="41"/>
    </location>
</feature>
<feature type="active site" description="Charge relay system" evidence="1">
    <location>
        <position position="86"/>
    </location>
</feature>
<feature type="active site" description="Charge relay system" evidence="1">
    <location>
        <position position="180"/>
    </location>
</feature>
<feature type="disulfide bond" evidence="2 3">
    <location>
        <begin position="7"/>
        <end position="139"/>
    </location>
</feature>
<feature type="disulfide bond" evidence="2 3">
    <location>
        <begin position="26"/>
        <end position="42"/>
    </location>
</feature>
<feature type="disulfide bond" evidence="2 3">
    <location>
        <begin position="74"/>
        <end position="232"/>
    </location>
</feature>
<feature type="disulfide bond" evidence="2 3">
    <location>
        <begin position="118"/>
        <end position="186"/>
    </location>
</feature>
<feature type="disulfide bond" evidence="2 3">
    <location>
        <begin position="150"/>
        <end position="165"/>
    </location>
</feature>
<feature type="disulfide bond" evidence="2 3">
    <location>
        <begin position="176"/>
        <end position="201"/>
    </location>
</feature>
<feature type="sequence variant" evidence="3">
    <original>P</original>
    <variation>D</variation>
    <location>
        <position position="234"/>
    </location>
</feature>
<reference evidence="4" key="1">
    <citation type="journal article" date="2000" name="Biochemistry">
        <title>A novel venombin B from Agkistrodon contortrix contortrix: evidence for recognition properties in the surface around the primary specificity pocket different from thrombin.</title>
        <authorList>
            <person name="Amiconi G."/>
            <person name="Amoresano A."/>
            <person name="Boumis G."/>
            <person name="Brancaccio A."/>
            <person name="De Cristofaro R."/>
            <person name="De Pascalis A."/>
            <person name="Di Girolamo S."/>
            <person name="Maras B."/>
            <person name="Scaloni A."/>
        </authorList>
    </citation>
    <scope>PROTEIN SEQUENCE</scope>
    <scope>FUNCTION</scope>
    <scope>ACTIVITY REGULATION</scope>
    <scope>MASS SPECTROMETRY</scope>
    <scope>DISULFIDE BONDS</scope>
    <source>
        <tissue>Venom</tissue>
    </source>
</reference>
<organism evidence="4">
    <name type="scientific">Agkistrodon contortrix contortrix</name>
    <name type="common">Southern copperhead</name>
    <dbReference type="NCBI Taxonomy" id="8713"/>
    <lineage>
        <taxon>Eukaryota</taxon>
        <taxon>Metazoa</taxon>
        <taxon>Chordata</taxon>
        <taxon>Craniata</taxon>
        <taxon>Vertebrata</taxon>
        <taxon>Euteleostomi</taxon>
        <taxon>Lepidosauria</taxon>
        <taxon>Squamata</taxon>
        <taxon>Bifurcata</taxon>
        <taxon>Unidentata</taxon>
        <taxon>Episquamata</taxon>
        <taxon>Toxicofera</taxon>
        <taxon>Serpentes</taxon>
        <taxon>Colubroidea</taxon>
        <taxon>Viperidae</taxon>
        <taxon>Crotalinae</taxon>
        <taxon>Agkistrodon</taxon>
    </lineage>
</organism>
<evidence type="ECO:0000250" key="1"/>
<evidence type="ECO:0000255" key="2">
    <source>
        <dbReference type="PROSITE-ProRule" id="PRU00274"/>
    </source>
</evidence>
<evidence type="ECO:0000269" key="3">
    <source>
    </source>
</evidence>
<evidence type="ECO:0000305" key="4"/>
<accession>P82981</accession>
<keyword id="KW-1204">Blood coagulation cascade activating toxin</keyword>
<keyword id="KW-0903">Direct protein sequencing</keyword>
<keyword id="KW-1015">Disulfide bond</keyword>
<keyword id="KW-1199">Hemostasis impairing toxin</keyword>
<keyword id="KW-0378">Hydrolase</keyword>
<keyword id="KW-0645">Protease</keyword>
<keyword id="KW-0964">Secreted</keyword>
<keyword id="KW-0720">Serine protease</keyword>
<keyword id="KW-0800">Toxin</keyword>
<proteinExistence type="evidence at protein level"/>
<name>VSP2_AGKCO</name>